<reference key="1">
    <citation type="journal article" date="2006" name="J. Bacteriol.">
        <title>Pathogenomic sequence analysis of Bacillus cereus and Bacillus thuringiensis isolates closely related to Bacillus anthracis.</title>
        <authorList>
            <person name="Han C.S."/>
            <person name="Xie G."/>
            <person name="Challacombe J.F."/>
            <person name="Altherr M.R."/>
            <person name="Bhotika S.S."/>
            <person name="Bruce D."/>
            <person name="Campbell C.S."/>
            <person name="Campbell M.L."/>
            <person name="Chen J."/>
            <person name="Chertkov O."/>
            <person name="Cleland C."/>
            <person name="Dimitrijevic M."/>
            <person name="Doggett N.A."/>
            <person name="Fawcett J.J."/>
            <person name="Glavina T."/>
            <person name="Goodwin L.A."/>
            <person name="Hill K.K."/>
            <person name="Hitchcock P."/>
            <person name="Jackson P.J."/>
            <person name="Keim P."/>
            <person name="Kewalramani A.R."/>
            <person name="Longmire J."/>
            <person name="Lucas S."/>
            <person name="Malfatti S."/>
            <person name="McMurry K."/>
            <person name="Meincke L.J."/>
            <person name="Misra M."/>
            <person name="Moseman B.L."/>
            <person name="Mundt M."/>
            <person name="Munk A.C."/>
            <person name="Okinaka R.T."/>
            <person name="Parson-Quintana B."/>
            <person name="Reilly L.P."/>
            <person name="Richardson P."/>
            <person name="Robinson D.L."/>
            <person name="Rubin E."/>
            <person name="Saunders E."/>
            <person name="Tapia R."/>
            <person name="Tesmer J.G."/>
            <person name="Thayer N."/>
            <person name="Thompson L.S."/>
            <person name="Tice H."/>
            <person name="Ticknor L.O."/>
            <person name="Wills P.L."/>
            <person name="Brettin T.S."/>
            <person name="Gilna P."/>
        </authorList>
    </citation>
    <scope>NUCLEOTIDE SEQUENCE [LARGE SCALE GENOMIC DNA]</scope>
    <source>
        <strain>ZK / E33L</strain>
    </source>
</reference>
<comment type="function">
    <text evidence="1">A non-essential component of RNA polymerase (RNAP).</text>
</comment>
<comment type="catalytic activity">
    <reaction evidence="1">
        <text>RNA(n) + a ribonucleoside 5'-triphosphate = RNA(n+1) + diphosphate</text>
        <dbReference type="Rhea" id="RHEA:21248"/>
        <dbReference type="Rhea" id="RHEA-COMP:14527"/>
        <dbReference type="Rhea" id="RHEA-COMP:17342"/>
        <dbReference type="ChEBI" id="CHEBI:33019"/>
        <dbReference type="ChEBI" id="CHEBI:61557"/>
        <dbReference type="ChEBI" id="CHEBI:140395"/>
        <dbReference type="EC" id="2.7.7.6"/>
    </reaction>
</comment>
<comment type="subunit">
    <text evidence="1">RNAP is composed of a core of 2 alpha, a beta and a beta' subunit. The core is associated with a delta subunit, and at least one of epsilon or omega. When a sigma factor is associated with the core the holoenzyme is formed, which can initiate transcription.</text>
</comment>
<comment type="similarity">
    <text evidence="1">Belongs to the RNA polymerase subunit epsilon family.</text>
</comment>
<sequence length="70" mass="8189">MIFKVFYQEKMTEVPVRENTKVLYLEATSEKDVRTKLNKFAYNIEFVQSVTGNHLEYEKANADLTLAEIV</sequence>
<protein>
    <recommendedName>
        <fullName evidence="1">DNA-directed RNA polymerase subunit epsilon</fullName>
        <shortName evidence="1">RNAP epsilon subunit</shortName>
        <ecNumber evidence="1">2.7.7.6</ecNumber>
    </recommendedName>
    <alternativeName>
        <fullName evidence="1">RNA polymerase epsilon subunit</fullName>
    </alternativeName>
    <alternativeName>
        <fullName evidence="1">Transcriptase subunit epsilon</fullName>
    </alternativeName>
</protein>
<gene>
    <name evidence="1" type="primary">rpoY</name>
    <name type="ordered locus">BCE33L3734</name>
</gene>
<name>RPOY_BACCZ</name>
<dbReference type="EC" id="2.7.7.6" evidence="1"/>
<dbReference type="EMBL" id="CP000001">
    <property type="protein sequence ID" value="AAU16532.1"/>
    <property type="molecule type" value="Genomic_DNA"/>
</dbReference>
<dbReference type="RefSeq" id="WP_000576443.1">
    <property type="nucleotide sequence ID" value="NZ_CP009968.1"/>
</dbReference>
<dbReference type="SMR" id="Q635V2"/>
<dbReference type="KEGG" id="bcz:BCE33L3734"/>
<dbReference type="PATRIC" id="fig|288681.22.peg.1675"/>
<dbReference type="Proteomes" id="UP000002612">
    <property type="component" value="Chromosome"/>
</dbReference>
<dbReference type="GO" id="GO:0000428">
    <property type="term" value="C:DNA-directed RNA polymerase complex"/>
    <property type="evidence" value="ECO:0007669"/>
    <property type="project" value="UniProtKB-KW"/>
</dbReference>
<dbReference type="GO" id="GO:0003677">
    <property type="term" value="F:DNA binding"/>
    <property type="evidence" value="ECO:0007669"/>
    <property type="project" value="UniProtKB-UniRule"/>
</dbReference>
<dbReference type="GO" id="GO:0003899">
    <property type="term" value="F:DNA-directed RNA polymerase activity"/>
    <property type="evidence" value="ECO:0007669"/>
    <property type="project" value="UniProtKB-UniRule"/>
</dbReference>
<dbReference type="GO" id="GO:0006351">
    <property type="term" value="P:DNA-templated transcription"/>
    <property type="evidence" value="ECO:0007669"/>
    <property type="project" value="UniProtKB-UniRule"/>
</dbReference>
<dbReference type="Gene3D" id="3.10.20.730">
    <property type="entry name" value="RNAP, epsilon subunit-like"/>
    <property type="match status" value="1"/>
</dbReference>
<dbReference type="HAMAP" id="MF_01553">
    <property type="entry name" value="RNApol_bact_RpoY"/>
    <property type="match status" value="1"/>
</dbReference>
<dbReference type="InterPro" id="IPR009907">
    <property type="entry name" value="RpoY"/>
</dbReference>
<dbReference type="NCBIfam" id="NF010188">
    <property type="entry name" value="PRK13667.1"/>
    <property type="match status" value="1"/>
</dbReference>
<dbReference type="Pfam" id="PF07288">
    <property type="entry name" value="RpoY"/>
    <property type="match status" value="1"/>
</dbReference>
<accession>Q635V2</accession>
<proteinExistence type="inferred from homology"/>
<evidence type="ECO:0000255" key="1">
    <source>
        <dbReference type="HAMAP-Rule" id="MF_01553"/>
    </source>
</evidence>
<organism>
    <name type="scientific">Bacillus cereus (strain ZK / E33L)</name>
    <dbReference type="NCBI Taxonomy" id="288681"/>
    <lineage>
        <taxon>Bacteria</taxon>
        <taxon>Bacillati</taxon>
        <taxon>Bacillota</taxon>
        <taxon>Bacilli</taxon>
        <taxon>Bacillales</taxon>
        <taxon>Bacillaceae</taxon>
        <taxon>Bacillus</taxon>
        <taxon>Bacillus cereus group</taxon>
    </lineage>
</organism>
<keyword id="KW-0240">DNA-directed RNA polymerase</keyword>
<keyword id="KW-0548">Nucleotidyltransferase</keyword>
<keyword id="KW-0804">Transcription</keyword>
<keyword id="KW-0808">Transferase</keyword>
<feature type="chain" id="PRO_0000163117" description="DNA-directed RNA polymerase subunit epsilon">
    <location>
        <begin position="1"/>
        <end position="70"/>
    </location>
</feature>